<proteinExistence type="inferred from homology"/>
<gene>
    <name evidence="1" type="primary">acpH</name>
    <name type="ordered locus">ECA1118</name>
</gene>
<feature type="chain" id="PRO_0000226268" description="Acyl carrier protein phosphodiesterase">
    <location>
        <begin position="1"/>
        <end position="193"/>
    </location>
</feature>
<protein>
    <recommendedName>
        <fullName evidence="1">Acyl carrier protein phosphodiesterase</fullName>
        <shortName evidence="1">ACP phosphodiesterase</shortName>
        <ecNumber evidence="1">3.1.4.14</ecNumber>
    </recommendedName>
</protein>
<name>ACPH_PECAS</name>
<dbReference type="EC" id="3.1.4.14" evidence="1"/>
<dbReference type="EMBL" id="BX950851">
    <property type="protein sequence ID" value="CAG74028.1"/>
    <property type="molecule type" value="Genomic_DNA"/>
</dbReference>
<dbReference type="RefSeq" id="WP_011092712.1">
    <property type="nucleotide sequence ID" value="NC_004547.2"/>
</dbReference>
<dbReference type="SMR" id="Q6D857"/>
<dbReference type="STRING" id="218491.ECA1118"/>
<dbReference type="KEGG" id="eca:ECA1118"/>
<dbReference type="PATRIC" id="fig|218491.5.peg.1127"/>
<dbReference type="eggNOG" id="COG3124">
    <property type="taxonomic scope" value="Bacteria"/>
</dbReference>
<dbReference type="HOGENOM" id="CLU_099370_1_0_6"/>
<dbReference type="OrthoDB" id="8442777at2"/>
<dbReference type="Proteomes" id="UP000007966">
    <property type="component" value="Chromosome"/>
</dbReference>
<dbReference type="GO" id="GO:0008770">
    <property type="term" value="F:[acyl-carrier-protein] phosphodiesterase activity"/>
    <property type="evidence" value="ECO:0007669"/>
    <property type="project" value="UniProtKB-UniRule"/>
</dbReference>
<dbReference type="GO" id="GO:0006633">
    <property type="term" value="P:fatty acid biosynthetic process"/>
    <property type="evidence" value="ECO:0007669"/>
    <property type="project" value="UniProtKB-UniRule"/>
</dbReference>
<dbReference type="HAMAP" id="MF_01950">
    <property type="entry name" value="AcpH"/>
    <property type="match status" value="1"/>
</dbReference>
<dbReference type="InterPro" id="IPR007431">
    <property type="entry name" value="ACP_PD"/>
</dbReference>
<dbReference type="InterPro" id="IPR023491">
    <property type="entry name" value="ACP_phosphodiesterase_gpbac"/>
</dbReference>
<dbReference type="PANTHER" id="PTHR38764">
    <property type="entry name" value="ACYL CARRIER PROTEIN PHOSPHODIESTERASE"/>
    <property type="match status" value="1"/>
</dbReference>
<dbReference type="PANTHER" id="PTHR38764:SF1">
    <property type="entry name" value="ACYL CARRIER PROTEIN PHOSPHODIESTERASE"/>
    <property type="match status" value="1"/>
</dbReference>
<dbReference type="Pfam" id="PF04336">
    <property type="entry name" value="ACP_PD"/>
    <property type="match status" value="1"/>
</dbReference>
<dbReference type="PIRSF" id="PIRSF011489">
    <property type="entry name" value="DUF479"/>
    <property type="match status" value="1"/>
</dbReference>
<keyword id="KW-0275">Fatty acid biosynthesis</keyword>
<keyword id="KW-0276">Fatty acid metabolism</keyword>
<keyword id="KW-0378">Hydrolase</keyword>
<keyword id="KW-0444">Lipid biosynthesis</keyword>
<keyword id="KW-0443">Lipid metabolism</keyword>
<keyword id="KW-1185">Reference proteome</keyword>
<organism>
    <name type="scientific">Pectobacterium atrosepticum (strain SCRI 1043 / ATCC BAA-672)</name>
    <name type="common">Erwinia carotovora subsp. atroseptica</name>
    <dbReference type="NCBI Taxonomy" id="218491"/>
    <lineage>
        <taxon>Bacteria</taxon>
        <taxon>Pseudomonadati</taxon>
        <taxon>Pseudomonadota</taxon>
        <taxon>Gammaproteobacteria</taxon>
        <taxon>Enterobacterales</taxon>
        <taxon>Pectobacteriaceae</taxon>
        <taxon>Pectobacterium</taxon>
    </lineage>
</organism>
<accession>Q6D857</accession>
<evidence type="ECO:0000255" key="1">
    <source>
        <dbReference type="HAMAP-Rule" id="MF_01950"/>
    </source>
</evidence>
<comment type="function">
    <text evidence="1">Converts holo-ACP to apo-ACP by hydrolytic cleavage of the phosphopantetheine prosthetic group from ACP.</text>
</comment>
<comment type="catalytic activity">
    <reaction evidence="1">
        <text>holo-[ACP] + H2O = apo-[ACP] + (R)-4'-phosphopantetheine + H(+)</text>
        <dbReference type="Rhea" id="RHEA:20537"/>
        <dbReference type="Rhea" id="RHEA-COMP:9685"/>
        <dbReference type="Rhea" id="RHEA-COMP:9690"/>
        <dbReference type="ChEBI" id="CHEBI:15377"/>
        <dbReference type="ChEBI" id="CHEBI:15378"/>
        <dbReference type="ChEBI" id="CHEBI:29999"/>
        <dbReference type="ChEBI" id="CHEBI:61723"/>
        <dbReference type="ChEBI" id="CHEBI:64479"/>
        <dbReference type="EC" id="3.1.4.14"/>
    </reaction>
</comment>
<comment type="similarity">
    <text evidence="1">Belongs to the AcpH family.</text>
</comment>
<sequence>MNFLAHLHLATLADSSLLGNLMADFVRGNPQGSYADEIVAGIRLHRRVDSLTDSLPEVKQARQYFSDEFRRVSPITLDVLWDHYLARHWLQLVPDTPLQTFIDGAQSQIEPNLAQTPERFQNLNLYLWPERWMTRYAELPFIADVLHRMSVRRPKLAALSGSFQDIEQHYHQFEILFWQFYPRMMQLAKTQQL</sequence>
<reference key="1">
    <citation type="journal article" date="2004" name="Proc. Natl. Acad. Sci. U.S.A.">
        <title>Genome sequence of the enterobacterial phytopathogen Erwinia carotovora subsp. atroseptica and characterization of virulence factors.</title>
        <authorList>
            <person name="Bell K.S."/>
            <person name="Sebaihia M."/>
            <person name="Pritchard L."/>
            <person name="Holden M.T.G."/>
            <person name="Hyman L.J."/>
            <person name="Holeva M.C."/>
            <person name="Thomson N.R."/>
            <person name="Bentley S.D."/>
            <person name="Churcher L.J.C."/>
            <person name="Mungall K."/>
            <person name="Atkin R."/>
            <person name="Bason N."/>
            <person name="Brooks K."/>
            <person name="Chillingworth T."/>
            <person name="Clark K."/>
            <person name="Doggett J."/>
            <person name="Fraser A."/>
            <person name="Hance Z."/>
            <person name="Hauser H."/>
            <person name="Jagels K."/>
            <person name="Moule S."/>
            <person name="Norbertczak H."/>
            <person name="Ormond D."/>
            <person name="Price C."/>
            <person name="Quail M.A."/>
            <person name="Sanders M."/>
            <person name="Walker D."/>
            <person name="Whitehead S."/>
            <person name="Salmond G.P.C."/>
            <person name="Birch P.R.J."/>
            <person name="Parkhill J."/>
            <person name="Toth I.K."/>
        </authorList>
    </citation>
    <scope>NUCLEOTIDE SEQUENCE [LARGE SCALE GENOMIC DNA]</scope>
    <source>
        <strain>SCRI 1043 / ATCC BAA-672</strain>
    </source>
</reference>